<feature type="chain" id="PRO_0000191684" description="Translin">
    <location>
        <begin position="1"/>
        <end position="228"/>
    </location>
</feature>
<feature type="region of interest" description="DNA/RNA binding">
    <location>
        <begin position="86"/>
        <end position="90"/>
    </location>
</feature>
<feature type="region of interest" description="Leucine-zipper" evidence="2">
    <location>
        <begin position="177"/>
        <end position="198"/>
    </location>
</feature>
<feature type="modified residue" description="N6-acetyllysine" evidence="1">
    <location>
        <position position="187"/>
    </location>
</feature>
<feature type="modified residue" description="Phosphoserine" evidence="1">
    <location>
        <position position="190"/>
    </location>
</feature>
<feature type="modified residue" description="N6-acetyllysine" evidence="1">
    <location>
        <position position="199"/>
    </location>
</feature>
<feature type="helix" evidence="6">
    <location>
        <begin position="3"/>
        <end position="43"/>
    </location>
</feature>
<feature type="turn" evidence="6">
    <location>
        <begin position="49"/>
        <end position="52"/>
    </location>
</feature>
<feature type="helix" evidence="6">
    <location>
        <begin position="54"/>
        <end position="75"/>
    </location>
</feature>
<feature type="helix" evidence="6">
    <location>
        <begin position="81"/>
        <end position="86"/>
    </location>
</feature>
<feature type="helix" evidence="6">
    <location>
        <begin position="88"/>
        <end position="90"/>
    </location>
</feature>
<feature type="helix" evidence="6">
    <location>
        <begin position="92"/>
        <end position="110"/>
    </location>
</feature>
<feature type="helix" evidence="6">
    <location>
        <begin position="116"/>
        <end position="122"/>
    </location>
</feature>
<feature type="strand" evidence="6">
    <location>
        <begin position="130"/>
        <end position="132"/>
    </location>
</feature>
<feature type="helix" evidence="6">
    <location>
        <begin position="137"/>
        <end position="159"/>
    </location>
</feature>
<feature type="turn" evidence="6">
    <location>
        <begin position="160"/>
        <end position="162"/>
    </location>
</feature>
<feature type="helix" evidence="6">
    <location>
        <begin position="166"/>
        <end position="182"/>
    </location>
</feature>
<feature type="helix" evidence="6">
    <location>
        <begin position="189"/>
        <end position="195"/>
    </location>
</feature>
<feature type="helix" evidence="6">
    <location>
        <begin position="198"/>
        <end position="215"/>
    </location>
</feature>
<name>TSN_MOUSE</name>
<evidence type="ECO:0000250" key="1">
    <source>
        <dbReference type="UniProtKB" id="Q15631"/>
    </source>
</evidence>
<evidence type="ECO:0000255" key="2"/>
<evidence type="ECO:0000269" key="3">
    <source>
    </source>
</evidence>
<evidence type="ECO:0000269" key="4">
    <source>
    </source>
</evidence>
<evidence type="ECO:0000305" key="5"/>
<evidence type="ECO:0007829" key="6">
    <source>
        <dbReference type="PDB" id="1KEY"/>
    </source>
</evidence>
<organism>
    <name type="scientific">Mus musculus</name>
    <name type="common">Mouse</name>
    <dbReference type="NCBI Taxonomy" id="10090"/>
    <lineage>
        <taxon>Eukaryota</taxon>
        <taxon>Metazoa</taxon>
        <taxon>Chordata</taxon>
        <taxon>Craniata</taxon>
        <taxon>Vertebrata</taxon>
        <taxon>Euteleostomi</taxon>
        <taxon>Mammalia</taxon>
        <taxon>Eutheria</taxon>
        <taxon>Euarchontoglires</taxon>
        <taxon>Glires</taxon>
        <taxon>Rodentia</taxon>
        <taxon>Myomorpha</taxon>
        <taxon>Muroidea</taxon>
        <taxon>Muridae</taxon>
        <taxon>Murinae</taxon>
        <taxon>Mus</taxon>
        <taxon>Mus</taxon>
    </lineage>
</organism>
<comment type="function">
    <text evidence="4">DNA-binding protein that specifically recognizes consensus sequences at the breakpoint junctions in chromosomal translocations, mostly involving immunoglobulin (Ig)/T-cell receptor gene segments. Seems to recognize single-stranded DNA ends generated by staggered breaks occurring at recombination hot spots.</text>
</comment>
<comment type="function">
    <text evidence="4">Exhibits both single-stranded and double-stranded endoribonuclease activity. May act as an activator of RNA-induced silencing complex (RISC) by facilitating endonucleolytic cleavage of the siRNA passenger strand.</text>
</comment>
<comment type="subunit">
    <text evidence="3">Ring-shaped heterooctamer of six TSN and two TSNAX subunits, DNA/RNA binding occurs inside the ring.</text>
</comment>
<comment type="subcellular location">
    <subcellularLocation>
        <location evidence="1">Cytoplasm</location>
    </subcellularLocation>
    <subcellularLocation>
        <location evidence="1">Nucleus</location>
    </subcellularLocation>
</comment>
<comment type="similarity">
    <text evidence="5">Belongs to the translin family.</text>
</comment>
<sequence length="228" mass="26201">MSVSEIFVELQGFLAAEQDIREEIRKVVQSLEQTAREILTLLQGVHQGTGFQDIPKRCLKAREHFSTVKTHLTSLKTKFPAEQYYRFHEHWRFVLQRLVFLAAFVVYLETETLVTREAVTEILGIEPDREKGFHLDVEDYLSGVLILASELSRLSVNSVTAGDYSRPLHISTFINELDSGFRLLNLKNDSLRKRYDGLKYDVKKVEEVVYDLSIRGFNKETAAACGEK</sequence>
<dbReference type="EC" id="3.1.-.-" evidence="4"/>
<dbReference type="EMBL" id="X81464">
    <property type="protein sequence ID" value="CAA57222.1"/>
    <property type="molecule type" value="mRNA"/>
</dbReference>
<dbReference type="EMBL" id="Y12568">
    <property type="protein sequence ID" value="CAA73151.1"/>
    <property type="molecule type" value="Genomic_DNA"/>
</dbReference>
<dbReference type="EMBL" id="Y12569">
    <property type="protein sequence ID" value="CAA73151.1"/>
    <property type="status" value="JOINED"/>
    <property type="molecule type" value="Genomic_DNA"/>
</dbReference>
<dbReference type="EMBL" id="Y12570">
    <property type="protein sequence ID" value="CAA73151.1"/>
    <property type="status" value="JOINED"/>
    <property type="molecule type" value="Genomic_DNA"/>
</dbReference>
<dbReference type="EMBL" id="Y12571">
    <property type="protein sequence ID" value="CAA73151.1"/>
    <property type="status" value="JOINED"/>
    <property type="molecule type" value="Genomic_DNA"/>
</dbReference>
<dbReference type="EMBL" id="Y12572">
    <property type="protein sequence ID" value="CAA73151.1"/>
    <property type="status" value="JOINED"/>
    <property type="molecule type" value="Genomic_DNA"/>
</dbReference>
<dbReference type="EMBL" id="BC004615">
    <property type="protein sequence ID" value="AAH04615.1"/>
    <property type="molecule type" value="mRNA"/>
</dbReference>
<dbReference type="CCDS" id="CCDS35690.1"/>
<dbReference type="RefSeq" id="NP_035780.1">
    <property type="nucleotide sequence ID" value="NM_011650.5"/>
</dbReference>
<dbReference type="PDB" id="1KEY">
    <property type="method" value="X-ray"/>
    <property type="resolution" value="2.65 A"/>
    <property type="chains" value="A/B/C/D=1-228"/>
</dbReference>
<dbReference type="PDBsum" id="1KEY"/>
<dbReference type="SMR" id="Q62348"/>
<dbReference type="BioGRID" id="204347">
    <property type="interactions" value="18"/>
</dbReference>
<dbReference type="ComplexPortal" id="CPX-4629">
    <property type="entry name" value="C3PO endoribonuclease complex"/>
</dbReference>
<dbReference type="CORUM" id="Q62348"/>
<dbReference type="FunCoup" id="Q62348">
    <property type="interactions" value="5153"/>
</dbReference>
<dbReference type="STRING" id="10090.ENSMUSP00000027623"/>
<dbReference type="GlyGen" id="Q62348">
    <property type="glycosylation" value="1 site, 1 O-linked glycan (1 site)"/>
</dbReference>
<dbReference type="iPTMnet" id="Q62348"/>
<dbReference type="PhosphoSitePlus" id="Q62348"/>
<dbReference type="SwissPalm" id="Q62348"/>
<dbReference type="jPOST" id="Q62348"/>
<dbReference type="PaxDb" id="10090-ENSMUSP00000027623"/>
<dbReference type="ProteomicsDB" id="297996"/>
<dbReference type="Pumba" id="Q62348"/>
<dbReference type="Antibodypedia" id="33410">
    <property type="antibodies" value="229 antibodies from 34 providers"/>
</dbReference>
<dbReference type="Ensembl" id="ENSMUST00000027623.9">
    <property type="protein sequence ID" value="ENSMUSP00000027623.8"/>
    <property type="gene ID" value="ENSMUSG00000026374.15"/>
</dbReference>
<dbReference type="GeneID" id="22099"/>
<dbReference type="KEGG" id="mmu:22099"/>
<dbReference type="UCSC" id="uc007cib.1">
    <property type="organism name" value="mouse"/>
</dbReference>
<dbReference type="AGR" id="MGI:109263"/>
<dbReference type="CTD" id="7247"/>
<dbReference type="MGI" id="MGI:109263">
    <property type="gene designation" value="Tsn"/>
</dbReference>
<dbReference type="VEuPathDB" id="HostDB:ENSMUSG00000026374"/>
<dbReference type="eggNOG" id="KOG3067">
    <property type="taxonomic scope" value="Eukaryota"/>
</dbReference>
<dbReference type="GeneTree" id="ENSGT00940000153568"/>
<dbReference type="HOGENOM" id="CLU_079179_0_0_1"/>
<dbReference type="InParanoid" id="Q62348"/>
<dbReference type="OMA" id="DAFHFTI"/>
<dbReference type="OrthoDB" id="829at2759"/>
<dbReference type="PhylomeDB" id="Q62348"/>
<dbReference type="TreeFam" id="TF323690"/>
<dbReference type="Reactome" id="R-MMU-426486">
    <property type="pathway name" value="Small interfering RNA (siRNA) biogenesis"/>
</dbReference>
<dbReference type="BioGRID-ORCS" id="22099">
    <property type="hits" value="2 hits in 76 CRISPR screens"/>
</dbReference>
<dbReference type="ChiTaRS" id="Tsn">
    <property type="organism name" value="mouse"/>
</dbReference>
<dbReference type="EvolutionaryTrace" id="Q62348"/>
<dbReference type="PRO" id="PR:Q62348"/>
<dbReference type="Proteomes" id="UP000000589">
    <property type="component" value="Chromosome 1"/>
</dbReference>
<dbReference type="RNAct" id="Q62348">
    <property type="molecule type" value="protein"/>
</dbReference>
<dbReference type="Bgee" id="ENSMUSG00000026374">
    <property type="expression patterns" value="Expressed in respiratory primordium and 256 other cell types or tissues"/>
</dbReference>
<dbReference type="ExpressionAtlas" id="Q62348">
    <property type="expression patterns" value="baseline and differential"/>
</dbReference>
<dbReference type="GO" id="GO:0005737">
    <property type="term" value="C:cytoplasm"/>
    <property type="evidence" value="ECO:0000314"/>
    <property type="project" value="MGI"/>
</dbReference>
<dbReference type="GO" id="GO:0005783">
    <property type="term" value="C:endoplasmic reticulum"/>
    <property type="evidence" value="ECO:0007669"/>
    <property type="project" value="Ensembl"/>
</dbReference>
<dbReference type="GO" id="GO:1902555">
    <property type="term" value="C:endoribonuclease complex"/>
    <property type="evidence" value="ECO:0000266"/>
    <property type="project" value="ComplexPortal"/>
</dbReference>
<dbReference type="GO" id="GO:0001673">
    <property type="term" value="C:male germ cell nucleus"/>
    <property type="evidence" value="ECO:0000314"/>
    <property type="project" value="MGI"/>
</dbReference>
<dbReference type="GO" id="GO:0005654">
    <property type="term" value="C:nucleoplasm"/>
    <property type="evidence" value="ECO:0007669"/>
    <property type="project" value="Ensembl"/>
</dbReference>
<dbReference type="GO" id="GO:0005634">
    <property type="term" value="C:nucleus"/>
    <property type="evidence" value="ECO:0000314"/>
    <property type="project" value="MGI"/>
</dbReference>
<dbReference type="GO" id="GO:0004519">
    <property type="term" value="F:endonuclease activity"/>
    <property type="evidence" value="ECO:0007669"/>
    <property type="project" value="UniProtKB-KW"/>
</dbReference>
<dbReference type="GO" id="GO:0042802">
    <property type="term" value="F:identical protein binding"/>
    <property type="evidence" value="ECO:0007669"/>
    <property type="project" value="Ensembl"/>
</dbReference>
<dbReference type="GO" id="GO:0003729">
    <property type="term" value="F:mRNA binding"/>
    <property type="evidence" value="ECO:0000314"/>
    <property type="project" value="MGI"/>
</dbReference>
<dbReference type="GO" id="GO:0003723">
    <property type="term" value="F:RNA binding"/>
    <property type="evidence" value="ECO:0000314"/>
    <property type="project" value="MGI"/>
</dbReference>
<dbReference type="GO" id="GO:0043565">
    <property type="term" value="F:sequence-specific DNA binding"/>
    <property type="evidence" value="ECO:0007669"/>
    <property type="project" value="InterPro"/>
</dbReference>
<dbReference type="GO" id="GO:0003697">
    <property type="term" value="F:single-stranded DNA binding"/>
    <property type="evidence" value="ECO:0007669"/>
    <property type="project" value="InterPro"/>
</dbReference>
<dbReference type="GO" id="GO:0035194">
    <property type="term" value="P:regulatory ncRNA-mediated post-transcriptional gene silencing"/>
    <property type="evidence" value="ECO:0000303"/>
    <property type="project" value="ComplexPortal"/>
</dbReference>
<dbReference type="GO" id="GO:0030422">
    <property type="term" value="P:siRNA processing"/>
    <property type="evidence" value="ECO:0000266"/>
    <property type="project" value="ComplexPortal"/>
</dbReference>
<dbReference type="CDD" id="cd14819">
    <property type="entry name" value="Translin"/>
    <property type="match status" value="1"/>
</dbReference>
<dbReference type="FunFam" id="1.20.58.200:FF:000002">
    <property type="entry name" value="Putative translin"/>
    <property type="match status" value="1"/>
</dbReference>
<dbReference type="FunFam" id="1.20.58.190:FF:000001">
    <property type="entry name" value="Translin"/>
    <property type="match status" value="1"/>
</dbReference>
<dbReference type="Gene3D" id="1.20.58.190">
    <property type="entry name" value="Translin, domain 1"/>
    <property type="match status" value="1"/>
</dbReference>
<dbReference type="Gene3D" id="1.20.58.200">
    <property type="entry name" value="Translin, domain 2"/>
    <property type="match status" value="1"/>
</dbReference>
<dbReference type="InterPro" id="IPR033956">
    <property type="entry name" value="Translin"/>
</dbReference>
<dbReference type="InterPro" id="IPR016069">
    <property type="entry name" value="Translin_C"/>
</dbReference>
<dbReference type="InterPro" id="IPR002848">
    <property type="entry name" value="Translin_fam"/>
</dbReference>
<dbReference type="InterPro" id="IPR016068">
    <property type="entry name" value="Translin_N"/>
</dbReference>
<dbReference type="InterPro" id="IPR036081">
    <property type="entry name" value="Translin_sf"/>
</dbReference>
<dbReference type="PANTHER" id="PTHR10741">
    <property type="entry name" value="TRANSLIN AND TRANSLIN ASSOCIATED PROTEIN X"/>
    <property type="match status" value="1"/>
</dbReference>
<dbReference type="Pfam" id="PF01997">
    <property type="entry name" value="Translin"/>
    <property type="match status" value="1"/>
</dbReference>
<dbReference type="SUPFAM" id="SSF74784">
    <property type="entry name" value="Translin"/>
    <property type="match status" value="1"/>
</dbReference>
<gene>
    <name type="primary">Tsn</name>
</gene>
<reference key="1">
    <citation type="journal article" date="1997" name="Genomics">
        <title>Genomic structure and chromosomal localization of the gene encoding translin, a recombination hotspot binding protein.</title>
        <authorList>
            <person name="Aoki K."/>
            <person name="Inazawa J."/>
            <person name="Takahashi T."/>
            <person name="Nakahara K."/>
            <person name="Kasai M."/>
        </authorList>
    </citation>
    <scope>NUCLEOTIDE SEQUENCE [MRNA]</scope>
    <source>
        <tissue>Thymus</tissue>
    </source>
</reference>
<reference key="2">
    <citation type="journal article" date="2004" name="Genome Res.">
        <title>The status, quality, and expansion of the NIH full-length cDNA project: the Mammalian Gene Collection (MGC).</title>
        <authorList>
            <consortium name="The MGC Project Team"/>
        </authorList>
    </citation>
    <scope>NUCLEOTIDE SEQUENCE [LARGE SCALE MRNA]</scope>
    <source>
        <strain>FVB/N</strain>
        <tissue>Mammary gland</tissue>
    </source>
</reference>
<reference key="3">
    <citation type="journal article" date="1999" name="FEBS Lett.">
        <title>The DNA binding activity of Translin is mediated by a basic region in the ring-shaped structure conserved in evolution.</title>
        <authorList>
            <person name="Aoki K."/>
            <person name="Suzuki K."/>
            <person name="Ishida R."/>
            <person name="Kasai M."/>
        </authorList>
    </citation>
    <scope>DNA/RNA-BINDING REGION</scope>
</reference>
<reference key="4">
    <citation type="journal article" date="2004" name="Biochemistry">
        <title>Testis brain ribonucleic acid-binding protein/translin possesses both single-stranded and double-stranded ribonuclease activities.</title>
        <authorList>
            <person name="Wang J."/>
            <person name="Boja E.S."/>
            <person name="Oubrahim H."/>
            <person name="Chock P.B."/>
        </authorList>
    </citation>
    <scope>FUNCTION IN RISC ACTIVATION</scope>
    <scope>ENDONUCLEASE ACTIVITY</scope>
</reference>
<reference key="5">
    <citation type="journal article" date="2010" name="Cell">
        <title>A tissue-specific atlas of mouse protein phosphorylation and expression.</title>
        <authorList>
            <person name="Huttlin E.L."/>
            <person name="Jedrychowski M.P."/>
            <person name="Elias J.E."/>
            <person name="Goswami T."/>
            <person name="Rad R."/>
            <person name="Beausoleil S.A."/>
            <person name="Villen J."/>
            <person name="Haas W."/>
            <person name="Sowa M.E."/>
            <person name="Gygi S.P."/>
        </authorList>
    </citation>
    <scope>IDENTIFICATION BY MASS SPECTROMETRY [LARGE SCALE ANALYSIS]</scope>
    <source>
        <tissue>Brain</tissue>
        <tissue>Brown adipose tissue</tissue>
        <tissue>Heart</tissue>
        <tissue>Kidney</tissue>
        <tissue>Liver</tissue>
        <tissue>Lung</tissue>
        <tissue>Pancreas</tissue>
        <tissue>Spleen</tissue>
        <tissue>Testis</tissue>
    </source>
</reference>
<reference key="6">
    <citation type="journal article" date="2002" name="J. Mol. Biol.">
        <title>Crystal structure of TB-RBP, a novel RNA-binding and regulating protein.</title>
        <authorList>
            <person name="Pascal J.M."/>
            <person name="Hart P.J."/>
            <person name="Hecht N.B."/>
            <person name="Robertus J.D."/>
        </authorList>
    </citation>
    <scope>X-RAY CRYSTALLOGRAPHY (2.65 ANGSTROMS)</scope>
    <scope>SUBUNIT</scope>
</reference>
<proteinExistence type="evidence at protein level"/>
<accession>Q62348</accession>
<keyword id="KW-0002">3D-structure</keyword>
<keyword id="KW-0007">Acetylation</keyword>
<keyword id="KW-0963">Cytoplasm</keyword>
<keyword id="KW-0238">DNA-binding</keyword>
<keyword id="KW-0255">Endonuclease</keyword>
<keyword id="KW-0378">Hydrolase</keyword>
<keyword id="KW-0540">Nuclease</keyword>
<keyword id="KW-0539">Nucleus</keyword>
<keyword id="KW-0597">Phosphoprotein</keyword>
<keyword id="KW-1185">Reference proteome</keyword>
<keyword id="KW-0694">RNA-binding</keyword>
<protein>
    <recommendedName>
        <fullName>Translin</fullName>
        <ecNumber evidence="4">3.1.-.-</ecNumber>
    </recommendedName>
    <alternativeName>
        <fullName>Component 3 of promoter of RISC</fullName>
        <shortName>C3PO</shortName>
    </alternativeName>
    <alternativeName>
        <fullName>Testis/brain RNA-binding protein</fullName>
        <shortName>TB-RBP</shortName>
    </alternativeName>
</protein>